<comment type="function">
    <text evidence="1">PPIases accelerate the folding of proteins. It catalyzes the cis-trans isomerization of proline imidic peptide bonds in oligopeptides (By similarity).</text>
</comment>
<comment type="catalytic activity">
    <reaction>
        <text>[protein]-peptidylproline (omega=180) = [protein]-peptidylproline (omega=0)</text>
        <dbReference type="Rhea" id="RHEA:16237"/>
        <dbReference type="Rhea" id="RHEA-COMP:10747"/>
        <dbReference type="Rhea" id="RHEA-COMP:10748"/>
        <dbReference type="ChEBI" id="CHEBI:83833"/>
        <dbReference type="ChEBI" id="CHEBI:83834"/>
        <dbReference type="EC" id="5.2.1.8"/>
    </reaction>
</comment>
<comment type="tissue specificity">
    <text evidence="3 4">Ubiquitous.</text>
</comment>
<comment type="similarity">
    <text evidence="5">Belongs to the cyclophilin-type PPIase family.</text>
</comment>
<protein>
    <recommendedName>
        <fullName>Peptidyl-prolyl cis-trans isomerase CYP22</fullName>
        <shortName>PPIase CYP22</shortName>
        <ecNumber>5.2.1.8</ecNumber>
    </recommendedName>
    <alternativeName>
        <fullName>Cyclophilin of 22 kDa</fullName>
    </alternativeName>
    <alternativeName>
        <fullName>Cyclophilin-22</fullName>
    </alternativeName>
</protein>
<accession>Q9ZVJ4</accession>
<dbReference type="EC" id="5.2.1.8"/>
<dbReference type="EMBL" id="AY568522">
    <property type="protein sequence ID" value="AAS75305.1"/>
    <property type="molecule type" value="mRNA"/>
</dbReference>
<dbReference type="EMBL" id="AC005499">
    <property type="protein sequence ID" value="AAC67345.1"/>
    <property type="molecule type" value="Genomic_DNA"/>
</dbReference>
<dbReference type="EMBL" id="CP002685">
    <property type="protein sequence ID" value="AEC09578.1"/>
    <property type="molecule type" value="Genomic_DNA"/>
</dbReference>
<dbReference type="EMBL" id="BT002031">
    <property type="protein sequence ID" value="AAN72042.1"/>
    <property type="molecule type" value="mRNA"/>
</dbReference>
<dbReference type="EMBL" id="BT006565">
    <property type="protein sequence ID" value="AAP21373.1"/>
    <property type="molecule type" value="mRNA"/>
</dbReference>
<dbReference type="PIR" id="F84808">
    <property type="entry name" value="F84808"/>
</dbReference>
<dbReference type="RefSeq" id="NP_181407.1">
    <property type="nucleotide sequence ID" value="NM_129430.4"/>
</dbReference>
<dbReference type="SMR" id="Q9ZVJ4"/>
<dbReference type="BioGRID" id="3797">
    <property type="interactions" value="5"/>
</dbReference>
<dbReference type="FunCoup" id="Q9ZVJ4">
    <property type="interactions" value="4052"/>
</dbReference>
<dbReference type="IntAct" id="Q9ZVJ4">
    <property type="interactions" value="1"/>
</dbReference>
<dbReference type="STRING" id="3702.Q9ZVJ4"/>
<dbReference type="PaxDb" id="3702-AT2G38730.1"/>
<dbReference type="ProteomicsDB" id="224657"/>
<dbReference type="EnsemblPlants" id="AT2G38730.1">
    <property type="protein sequence ID" value="AT2G38730.1"/>
    <property type="gene ID" value="AT2G38730"/>
</dbReference>
<dbReference type="GeneID" id="818455"/>
<dbReference type="Gramene" id="AT2G38730.1">
    <property type="protein sequence ID" value="AT2G38730.1"/>
    <property type="gene ID" value="AT2G38730"/>
</dbReference>
<dbReference type="KEGG" id="ath:AT2G38730"/>
<dbReference type="Araport" id="AT2G38730"/>
<dbReference type="TAIR" id="AT2G38730"/>
<dbReference type="eggNOG" id="KOG0879">
    <property type="taxonomic scope" value="Eukaryota"/>
</dbReference>
<dbReference type="HOGENOM" id="CLU_012062_4_3_1"/>
<dbReference type="InParanoid" id="Q9ZVJ4"/>
<dbReference type="OMA" id="CVSIYGH"/>
<dbReference type="OrthoDB" id="193499at2759"/>
<dbReference type="PhylomeDB" id="Q9ZVJ4"/>
<dbReference type="PRO" id="PR:Q9ZVJ4"/>
<dbReference type="Proteomes" id="UP000006548">
    <property type="component" value="Chromosome 2"/>
</dbReference>
<dbReference type="ExpressionAtlas" id="Q9ZVJ4">
    <property type="expression patterns" value="baseline and differential"/>
</dbReference>
<dbReference type="GO" id="GO:0000325">
    <property type="term" value="C:plant-type vacuole"/>
    <property type="evidence" value="ECO:0007005"/>
    <property type="project" value="TAIR"/>
</dbReference>
<dbReference type="GO" id="GO:0005886">
    <property type="term" value="C:plasma membrane"/>
    <property type="evidence" value="ECO:0007005"/>
    <property type="project" value="TAIR"/>
</dbReference>
<dbReference type="GO" id="GO:0003755">
    <property type="term" value="F:peptidyl-prolyl cis-trans isomerase activity"/>
    <property type="evidence" value="ECO:0007669"/>
    <property type="project" value="UniProtKB-KW"/>
</dbReference>
<dbReference type="CDD" id="cd01926">
    <property type="entry name" value="cyclophilin_ABH_like"/>
    <property type="match status" value="1"/>
</dbReference>
<dbReference type="FunFam" id="2.40.100.10:FF:000021">
    <property type="entry name" value="Peptidyl-prolyl cis-trans isomerase"/>
    <property type="match status" value="1"/>
</dbReference>
<dbReference type="Gene3D" id="2.40.100.10">
    <property type="entry name" value="Cyclophilin-like"/>
    <property type="match status" value="1"/>
</dbReference>
<dbReference type="InterPro" id="IPR029000">
    <property type="entry name" value="Cyclophilin-like_dom_sf"/>
</dbReference>
<dbReference type="InterPro" id="IPR024936">
    <property type="entry name" value="Cyclophilin-type_PPIase"/>
</dbReference>
<dbReference type="InterPro" id="IPR002130">
    <property type="entry name" value="Cyclophilin-type_PPIase_dom"/>
</dbReference>
<dbReference type="PANTHER" id="PTHR11071">
    <property type="entry name" value="PEPTIDYL-PROLYL CIS-TRANS ISOMERASE"/>
    <property type="match status" value="1"/>
</dbReference>
<dbReference type="PANTHER" id="PTHR11071:SF561">
    <property type="entry name" value="PEPTIDYL-PROLYL CIS-TRANS ISOMERASE D-RELATED"/>
    <property type="match status" value="1"/>
</dbReference>
<dbReference type="Pfam" id="PF00160">
    <property type="entry name" value="Pro_isomerase"/>
    <property type="match status" value="1"/>
</dbReference>
<dbReference type="PIRSF" id="PIRSF001467">
    <property type="entry name" value="Peptidylpro_ismrse"/>
    <property type="match status" value="1"/>
</dbReference>
<dbReference type="PRINTS" id="PR00153">
    <property type="entry name" value="CSAPPISMRASE"/>
</dbReference>
<dbReference type="SUPFAM" id="SSF50891">
    <property type="entry name" value="Cyclophilin-like"/>
    <property type="match status" value="1"/>
</dbReference>
<dbReference type="PROSITE" id="PS50072">
    <property type="entry name" value="CSA_PPIASE_2"/>
    <property type="match status" value="1"/>
</dbReference>
<evidence type="ECO:0000250" key="1"/>
<evidence type="ECO:0000255" key="2">
    <source>
        <dbReference type="PROSITE-ProRule" id="PRU00156"/>
    </source>
</evidence>
<evidence type="ECO:0000269" key="3">
    <source>
    </source>
</evidence>
<evidence type="ECO:0000269" key="4">
    <source>
    </source>
</evidence>
<evidence type="ECO:0000305" key="5"/>
<reference key="1">
    <citation type="journal article" date="2004" name="Plant Physiol.">
        <title>The Arabidopsis cyclophilin gene family.</title>
        <authorList>
            <person name="Romano P.G.N."/>
            <person name="Horton P."/>
            <person name="Gray J.E."/>
        </authorList>
    </citation>
    <scope>NUCLEOTIDE SEQUENCE [MRNA]</scope>
    <scope>TISSUE SPECIFICITY</scope>
    <scope>GENE FAMILY</scope>
    <scope>NOMENCLATURE</scope>
</reference>
<reference key="2">
    <citation type="journal article" date="1999" name="Nature">
        <title>Sequence and analysis of chromosome 2 of the plant Arabidopsis thaliana.</title>
        <authorList>
            <person name="Lin X."/>
            <person name="Kaul S."/>
            <person name="Rounsley S.D."/>
            <person name="Shea T.P."/>
            <person name="Benito M.-I."/>
            <person name="Town C.D."/>
            <person name="Fujii C.Y."/>
            <person name="Mason T.M."/>
            <person name="Bowman C.L."/>
            <person name="Barnstead M.E."/>
            <person name="Feldblyum T.V."/>
            <person name="Buell C.R."/>
            <person name="Ketchum K.A."/>
            <person name="Lee J.J."/>
            <person name="Ronning C.M."/>
            <person name="Koo H.L."/>
            <person name="Moffat K.S."/>
            <person name="Cronin L.A."/>
            <person name="Shen M."/>
            <person name="Pai G."/>
            <person name="Van Aken S."/>
            <person name="Umayam L."/>
            <person name="Tallon L.J."/>
            <person name="Gill J.E."/>
            <person name="Adams M.D."/>
            <person name="Carrera A.J."/>
            <person name="Creasy T.H."/>
            <person name="Goodman H.M."/>
            <person name="Somerville C.R."/>
            <person name="Copenhaver G.P."/>
            <person name="Preuss D."/>
            <person name="Nierman W.C."/>
            <person name="White O."/>
            <person name="Eisen J.A."/>
            <person name="Salzberg S.L."/>
            <person name="Fraser C.M."/>
            <person name="Venter J.C."/>
        </authorList>
    </citation>
    <scope>NUCLEOTIDE SEQUENCE [LARGE SCALE GENOMIC DNA]</scope>
    <source>
        <strain>cv. Columbia</strain>
    </source>
</reference>
<reference key="3">
    <citation type="journal article" date="2017" name="Plant J.">
        <title>Araport11: a complete reannotation of the Arabidopsis thaliana reference genome.</title>
        <authorList>
            <person name="Cheng C.Y."/>
            <person name="Krishnakumar V."/>
            <person name="Chan A.P."/>
            <person name="Thibaud-Nissen F."/>
            <person name="Schobel S."/>
            <person name="Town C.D."/>
        </authorList>
    </citation>
    <scope>GENOME REANNOTATION</scope>
    <source>
        <strain>cv. Columbia</strain>
    </source>
</reference>
<reference key="4">
    <citation type="journal article" date="2003" name="Science">
        <title>Empirical analysis of transcriptional activity in the Arabidopsis genome.</title>
        <authorList>
            <person name="Yamada K."/>
            <person name="Lim J."/>
            <person name="Dale J.M."/>
            <person name="Chen H."/>
            <person name="Shinn P."/>
            <person name="Palm C.J."/>
            <person name="Southwick A.M."/>
            <person name="Wu H.C."/>
            <person name="Kim C.J."/>
            <person name="Nguyen M."/>
            <person name="Pham P.K."/>
            <person name="Cheuk R.F."/>
            <person name="Karlin-Newmann G."/>
            <person name="Liu S.X."/>
            <person name="Lam B."/>
            <person name="Sakano H."/>
            <person name="Wu T."/>
            <person name="Yu G."/>
            <person name="Miranda M."/>
            <person name="Quach H.L."/>
            <person name="Tripp M."/>
            <person name="Chang C.H."/>
            <person name="Lee J.M."/>
            <person name="Toriumi M.J."/>
            <person name="Chan M.M."/>
            <person name="Tang C.C."/>
            <person name="Onodera C.S."/>
            <person name="Deng J.M."/>
            <person name="Akiyama K."/>
            <person name="Ansari Y."/>
            <person name="Arakawa T."/>
            <person name="Banh J."/>
            <person name="Banno F."/>
            <person name="Bowser L."/>
            <person name="Brooks S.Y."/>
            <person name="Carninci P."/>
            <person name="Chao Q."/>
            <person name="Choy N."/>
            <person name="Enju A."/>
            <person name="Goldsmith A.D."/>
            <person name="Gurjal M."/>
            <person name="Hansen N.F."/>
            <person name="Hayashizaki Y."/>
            <person name="Johnson-Hopson C."/>
            <person name="Hsuan V.W."/>
            <person name="Iida K."/>
            <person name="Karnes M."/>
            <person name="Khan S."/>
            <person name="Koesema E."/>
            <person name="Ishida J."/>
            <person name="Jiang P.X."/>
            <person name="Jones T."/>
            <person name="Kawai J."/>
            <person name="Kamiya A."/>
            <person name="Meyers C."/>
            <person name="Nakajima M."/>
            <person name="Narusaka M."/>
            <person name="Seki M."/>
            <person name="Sakurai T."/>
            <person name="Satou M."/>
            <person name="Tamse R."/>
            <person name="Vaysberg M."/>
            <person name="Wallender E.K."/>
            <person name="Wong C."/>
            <person name="Yamamura Y."/>
            <person name="Yuan S."/>
            <person name="Shinozaki K."/>
            <person name="Davis R.W."/>
            <person name="Theologis A."/>
            <person name="Ecker J.R."/>
        </authorList>
    </citation>
    <scope>NUCLEOTIDE SEQUENCE [LARGE SCALE MRNA]</scope>
    <source>
        <strain>cv. Columbia</strain>
    </source>
</reference>
<reference key="5">
    <citation type="journal article" date="2004" name="Plant Physiol.">
        <title>Immunophilins and parvulins. Superfamily of peptidyl prolyl isomerases in Arabidopsis.</title>
        <authorList>
            <person name="He Z."/>
            <person name="Li L."/>
            <person name="Luan S."/>
        </authorList>
    </citation>
    <scope>TISSUE SPECIFICITY</scope>
    <scope>GENE FAMILY</scope>
    <scope>NOMENCLATURE</scope>
</reference>
<organism>
    <name type="scientific">Arabidopsis thaliana</name>
    <name type="common">Mouse-ear cress</name>
    <dbReference type="NCBI Taxonomy" id="3702"/>
    <lineage>
        <taxon>Eukaryota</taxon>
        <taxon>Viridiplantae</taxon>
        <taxon>Streptophyta</taxon>
        <taxon>Embryophyta</taxon>
        <taxon>Tracheophyta</taxon>
        <taxon>Spermatophyta</taxon>
        <taxon>Magnoliopsida</taxon>
        <taxon>eudicotyledons</taxon>
        <taxon>Gunneridae</taxon>
        <taxon>Pentapetalae</taxon>
        <taxon>rosids</taxon>
        <taxon>malvids</taxon>
        <taxon>Brassicales</taxon>
        <taxon>Brassicaceae</taxon>
        <taxon>Camelineae</taxon>
        <taxon>Arabidopsis</taxon>
    </lineage>
</organism>
<sequence length="199" mass="21492">MNSGGGIVAAAAPSSGGGNVEWHVRPPNPKNPVVFFDVSIGGIPAGRIKMELFADIAPKTAENFRQFCTGELRKAGKPLGYKECQFHRVIKDFMVQSGDFLKNDGSGCMSIYGHKFEDENFTAKHTGPGLLSMANSGPNTNGCQFFITCAKCDWLDNKHVVFGRVLGDGLLVMRKIENVAIGPNNRPKLAVVITECGEM</sequence>
<proteinExistence type="evidence at transcript level"/>
<keyword id="KW-0143">Chaperone</keyword>
<keyword id="KW-0413">Isomerase</keyword>
<keyword id="KW-1185">Reference proteome</keyword>
<keyword id="KW-0697">Rotamase</keyword>
<gene>
    <name type="primary">CYP22</name>
    <name type="synonym">CYP22-1</name>
    <name type="ordered locus">At2g38730</name>
    <name type="ORF">T6A23.7</name>
</gene>
<name>CYP22_ARATH</name>
<feature type="chain" id="PRO_0000429937" description="Peptidyl-prolyl cis-trans isomerase CYP22">
    <location>
        <begin position="1"/>
        <end position="199"/>
    </location>
</feature>
<feature type="domain" description="PPIase cyclophilin-type" evidence="2">
    <location>
        <begin position="35"/>
        <end position="198"/>
    </location>
</feature>